<feature type="chain" id="PRO_0000292181" description="Replication factor C large subunit">
    <location>
        <begin position="1"/>
        <end position="497"/>
    </location>
</feature>
<feature type="region of interest" description="Disordered" evidence="2">
    <location>
        <begin position="428"/>
        <end position="497"/>
    </location>
</feature>
<feature type="compositionally biased region" description="Basic and acidic residues" evidence="2">
    <location>
        <begin position="428"/>
        <end position="455"/>
    </location>
</feature>
<feature type="compositionally biased region" description="Polar residues" evidence="2">
    <location>
        <begin position="456"/>
        <end position="465"/>
    </location>
</feature>
<feature type="compositionally biased region" description="Basic and acidic residues" evidence="2">
    <location>
        <begin position="466"/>
        <end position="476"/>
    </location>
</feature>
<feature type="binding site" evidence="1">
    <location>
        <begin position="50"/>
        <end position="57"/>
    </location>
    <ligand>
        <name>ATP</name>
        <dbReference type="ChEBI" id="CHEBI:30616"/>
    </ligand>
</feature>
<protein>
    <recommendedName>
        <fullName evidence="1">Replication factor C large subunit</fullName>
        <shortName evidence="1">RFC large subunit</shortName>
    </recommendedName>
    <alternativeName>
        <fullName evidence="1">Clamp loader large subunit</fullName>
    </alternativeName>
</protein>
<dbReference type="EMBL" id="CP000300">
    <property type="protein sequence ID" value="ABE53105.1"/>
    <property type="molecule type" value="Genomic_DNA"/>
</dbReference>
<dbReference type="RefSeq" id="WP_011500241.1">
    <property type="nucleotide sequence ID" value="NC_007955.1"/>
</dbReference>
<dbReference type="SMR" id="Q12TX1"/>
<dbReference type="STRING" id="259564.Mbur_2242"/>
<dbReference type="GeneID" id="3998854"/>
<dbReference type="KEGG" id="mbu:Mbur_2242"/>
<dbReference type="HOGENOM" id="CLU_027255_0_0_2"/>
<dbReference type="OrthoDB" id="8658at2157"/>
<dbReference type="Proteomes" id="UP000001979">
    <property type="component" value="Chromosome"/>
</dbReference>
<dbReference type="GO" id="GO:0005524">
    <property type="term" value="F:ATP binding"/>
    <property type="evidence" value="ECO:0007669"/>
    <property type="project" value="UniProtKB-UniRule"/>
</dbReference>
<dbReference type="GO" id="GO:0016887">
    <property type="term" value="F:ATP hydrolysis activity"/>
    <property type="evidence" value="ECO:0007669"/>
    <property type="project" value="InterPro"/>
</dbReference>
<dbReference type="GO" id="GO:0003689">
    <property type="term" value="F:DNA clamp loader activity"/>
    <property type="evidence" value="ECO:0007669"/>
    <property type="project" value="UniProtKB-UniRule"/>
</dbReference>
<dbReference type="GO" id="GO:0006260">
    <property type="term" value="P:DNA replication"/>
    <property type="evidence" value="ECO:0007669"/>
    <property type="project" value="UniProtKB-UniRule"/>
</dbReference>
<dbReference type="CDD" id="cd00009">
    <property type="entry name" value="AAA"/>
    <property type="match status" value="1"/>
</dbReference>
<dbReference type="CDD" id="cd18140">
    <property type="entry name" value="HLD_clamp_RFC"/>
    <property type="match status" value="1"/>
</dbReference>
<dbReference type="Gene3D" id="1.10.8.60">
    <property type="match status" value="1"/>
</dbReference>
<dbReference type="Gene3D" id="3.40.50.300">
    <property type="entry name" value="P-loop containing nucleotide triphosphate hydrolases"/>
    <property type="match status" value="1"/>
</dbReference>
<dbReference type="HAMAP" id="MF_01508">
    <property type="entry name" value="RfcL"/>
    <property type="match status" value="1"/>
</dbReference>
<dbReference type="InterPro" id="IPR003593">
    <property type="entry name" value="AAA+_ATPase"/>
</dbReference>
<dbReference type="InterPro" id="IPR003959">
    <property type="entry name" value="ATPase_AAA_core"/>
</dbReference>
<dbReference type="InterPro" id="IPR027417">
    <property type="entry name" value="P-loop_NTPase"/>
</dbReference>
<dbReference type="InterPro" id="IPR023935">
    <property type="entry name" value="Rep_factor-C_lsu"/>
</dbReference>
<dbReference type="InterPro" id="IPR047854">
    <property type="entry name" value="RFC_lid"/>
</dbReference>
<dbReference type="NCBIfam" id="NF003228">
    <property type="entry name" value="PRK04195.1-4"/>
    <property type="match status" value="1"/>
</dbReference>
<dbReference type="NCBIfam" id="NF003229">
    <property type="entry name" value="PRK04195.1-5"/>
    <property type="match status" value="1"/>
</dbReference>
<dbReference type="NCBIfam" id="NF003231">
    <property type="entry name" value="PRK04195.2-1"/>
    <property type="match status" value="1"/>
</dbReference>
<dbReference type="PANTHER" id="PTHR23389">
    <property type="entry name" value="CHROMOSOME TRANSMISSION FIDELITY FACTOR 18"/>
    <property type="match status" value="1"/>
</dbReference>
<dbReference type="PANTHER" id="PTHR23389:SF6">
    <property type="entry name" value="REPLICATION FACTOR C SUBUNIT 1"/>
    <property type="match status" value="1"/>
</dbReference>
<dbReference type="Pfam" id="PF00004">
    <property type="entry name" value="AAA"/>
    <property type="match status" value="1"/>
</dbReference>
<dbReference type="SMART" id="SM00382">
    <property type="entry name" value="AAA"/>
    <property type="match status" value="1"/>
</dbReference>
<dbReference type="SUPFAM" id="SSF52540">
    <property type="entry name" value="P-loop containing nucleoside triphosphate hydrolases"/>
    <property type="match status" value="1"/>
</dbReference>
<reference key="1">
    <citation type="journal article" date="2009" name="ISME J.">
        <title>The genome sequence of the psychrophilic archaeon, Methanococcoides burtonii: the role of genome evolution in cold adaptation.</title>
        <authorList>
            <person name="Allen M.A."/>
            <person name="Lauro F.M."/>
            <person name="Williams T.J."/>
            <person name="Burg D."/>
            <person name="Siddiqui K.S."/>
            <person name="De Francisci D."/>
            <person name="Chong K.W."/>
            <person name="Pilak O."/>
            <person name="Chew H.H."/>
            <person name="De Maere M.Z."/>
            <person name="Ting L."/>
            <person name="Katrib M."/>
            <person name="Ng C."/>
            <person name="Sowers K.R."/>
            <person name="Galperin M.Y."/>
            <person name="Anderson I.J."/>
            <person name="Ivanova N."/>
            <person name="Dalin E."/>
            <person name="Martinez M."/>
            <person name="Lapidus A."/>
            <person name="Hauser L."/>
            <person name="Land M."/>
            <person name="Thomas T."/>
            <person name="Cavicchioli R."/>
        </authorList>
    </citation>
    <scope>NUCLEOTIDE SEQUENCE [LARGE SCALE GENOMIC DNA]</scope>
    <source>
        <strain>DSM 6242 / NBRC 107633 / OCM 468 / ACE-M</strain>
    </source>
</reference>
<name>RFCL_METBU</name>
<proteinExistence type="inferred from homology"/>
<evidence type="ECO:0000255" key="1">
    <source>
        <dbReference type="HAMAP-Rule" id="MF_01508"/>
    </source>
</evidence>
<evidence type="ECO:0000256" key="2">
    <source>
        <dbReference type="SAM" id="MobiDB-lite"/>
    </source>
</evidence>
<gene>
    <name evidence="1" type="primary">rfcL</name>
    <name type="ordered locus">Mbur_2242</name>
</gene>
<comment type="function">
    <text evidence="1">Part of the RFC clamp loader complex which loads the PCNA sliding clamp onto DNA.</text>
</comment>
<comment type="subunit">
    <text evidence="1">Heteromultimer composed of small subunits (RfcS) and large subunits (RfcL).</text>
</comment>
<comment type="similarity">
    <text evidence="1">Belongs to the activator 1 small subunits family. RfcL subfamily.</text>
</comment>
<organism>
    <name type="scientific">Methanococcoides burtonii (strain DSM 6242 / NBRC 107633 / OCM 468 / ACE-M)</name>
    <dbReference type="NCBI Taxonomy" id="259564"/>
    <lineage>
        <taxon>Archaea</taxon>
        <taxon>Methanobacteriati</taxon>
        <taxon>Methanobacteriota</taxon>
        <taxon>Stenosarchaea group</taxon>
        <taxon>Methanomicrobia</taxon>
        <taxon>Methanosarcinales</taxon>
        <taxon>Methanosarcinaceae</taxon>
        <taxon>Methanococcoides</taxon>
    </lineage>
</organism>
<keyword id="KW-0067">ATP-binding</keyword>
<keyword id="KW-0235">DNA replication</keyword>
<keyword id="KW-0547">Nucleotide-binding</keyword>
<sequence length="497" mass="55694">MAESIEWVEKYRPQSLTDIVGNKKSVVDMREWAQSWLSGTPEKRAIILHGPAGVGKTSAAHALARDLDWETIELNASDQRTAGVIERVAGSASKMSSLTGTTAKRLIILDEADNIHGNADRGGARAIGGIIKNTDQPIVLIANDLYGLTPSVRSLCIELKFNSVQGRSMIPAMKRICVEEKIMCGVGVLEKLAESAGGDLRSAIKDLQAVATGRDEIHIEDIATSERDTKESIFKVLGKIFKSTDPKKALEATYGLDETPENLIHWIDENLPLQYGTEEGTQEDLITGYEYLAKADRYLGRVRKRQSYRLWRYAGALMTCGTVVSKTHVGRGFTKYQPPSFWRKMGQLRAKRDMRDNIASKIADHANKSMRYSRTDLAHLYGRMLEENEYAADVTFDLELSIDEMVYLTGKKKVTKDIQRIHDLAQAKRRSLGRDEGKAFFEKKPKKQTPDKKQMDLTQIINSTPQEDKVEKKETENVPPVKKSASKAKPQKTLFDF</sequence>
<accession>Q12TX1</accession>